<comment type="similarity">
    <text evidence="1">Belongs to the UPF0325 family.</text>
</comment>
<dbReference type="EMBL" id="AE017220">
    <property type="protein sequence ID" value="AAX64117.1"/>
    <property type="molecule type" value="Genomic_DNA"/>
</dbReference>
<dbReference type="RefSeq" id="WP_000272193.1">
    <property type="nucleotide sequence ID" value="NC_006905.1"/>
</dbReference>
<dbReference type="SMR" id="Q57T44"/>
<dbReference type="KEGG" id="sec:SCH_0211"/>
<dbReference type="HOGENOM" id="CLU_136774_0_0_6"/>
<dbReference type="Proteomes" id="UP000000538">
    <property type="component" value="Chromosome"/>
</dbReference>
<dbReference type="HAMAP" id="MF_01519">
    <property type="entry name" value="UPF0325"/>
    <property type="match status" value="1"/>
</dbReference>
<dbReference type="InterPro" id="IPR020911">
    <property type="entry name" value="UPF0325"/>
</dbReference>
<dbReference type="NCBIfam" id="NF010213">
    <property type="entry name" value="PRK13677.1"/>
    <property type="match status" value="1"/>
</dbReference>
<dbReference type="Pfam" id="PF11944">
    <property type="entry name" value="DUF3461"/>
    <property type="match status" value="1"/>
</dbReference>
<name>YAEH_SALCH</name>
<organism>
    <name type="scientific">Salmonella choleraesuis (strain SC-B67)</name>
    <dbReference type="NCBI Taxonomy" id="321314"/>
    <lineage>
        <taxon>Bacteria</taxon>
        <taxon>Pseudomonadati</taxon>
        <taxon>Pseudomonadota</taxon>
        <taxon>Gammaproteobacteria</taxon>
        <taxon>Enterobacterales</taxon>
        <taxon>Enterobacteriaceae</taxon>
        <taxon>Salmonella</taxon>
    </lineage>
</organism>
<proteinExistence type="inferred from homology"/>
<gene>
    <name evidence="1" type="primary">yaeH</name>
    <name type="ordered locus">SCH_0211</name>
</gene>
<accession>Q57T44</accession>
<protein>
    <recommendedName>
        <fullName evidence="1">UPF0325 protein YaeH</fullName>
    </recommendedName>
</protein>
<evidence type="ECO:0000255" key="1">
    <source>
        <dbReference type="HAMAP-Rule" id="MF_01519"/>
    </source>
</evidence>
<feature type="chain" id="PRO_0000211841" description="UPF0325 protein YaeH">
    <location>
        <begin position="1"/>
        <end position="128"/>
    </location>
</feature>
<sequence>MYDNLKSLGITNPEEIDRYSLRQEANNDILKIYFQKDRGEFFAKSVKFKYPRQRKTVVADGIGQGYKEVQEISPNLRYVIDELDQICQRDRSELDLKRKILDDLRHLESVVANKISEIEADLDKLTRK</sequence>
<reference key="1">
    <citation type="journal article" date="2005" name="Nucleic Acids Res.">
        <title>The genome sequence of Salmonella enterica serovar Choleraesuis, a highly invasive and resistant zoonotic pathogen.</title>
        <authorList>
            <person name="Chiu C.-H."/>
            <person name="Tang P."/>
            <person name="Chu C."/>
            <person name="Hu S."/>
            <person name="Bao Q."/>
            <person name="Yu J."/>
            <person name="Chou Y.-Y."/>
            <person name="Wang H.-S."/>
            <person name="Lee Y.-S."/>
        </authorList>
    </citation>
    <scope>NUCLEOTIDE SEQUENCE [LARGE SCALE GENOMIC DNA]</scope>
    <source>
        <strain>SC-B67</strain>
    </source>
</reference>